<evidence type="ECO:0000255" key="1">
    <source>
        <dbReference type="HAMAP-Rule" id="MF_01683"/>
    </source>
</evidence>
<dbReference type="EC" id="2.7.1.100" evidence="1"/>
<dbReference type="EMBL" id="CP000950">
    <property type="protein sequence ID" value="ACA69586.1"/>
    <property type="molecule type" value="Genomic_DNA"/>
</dbReference>
<dbReference type="RefSeq" id="WP_012304528.1">
    <property type="nucleotide sequence ID" value="NZ_CP009792.1"/>
</dbReference>
<dbReference type="SMR" id="B1JIK2"/>
<dbReference type="KEGG" id="ypy:YPK_3317"/>
<dbReference type="PATRIC" id="fig|502800.11.peg.4052"/>
<dbReference type="UniPathway" id="UPA00904">
    <property type="reaction ID" value="UER00872"/>
</dbReference>
<dbReference type="GO" id="GO:0005524">
    <property type="term" value="F:ATP binding"/>
    <property type="evidence" value="ECO:0007669"/>
    <property type="project" value="UniProtKB-UniRule"/>
</dbReference>
<dbReference type="GO" id="GO:0046522">
    <property type="term" value="F:S-methyl-5-thioribose kinase activity"/>
    <property type="evidence" value="ECO:0007669"/>
    <property type="project" value="UniProtKB-UniRule"/>
</dbReference>
<dbReference type="GO" id="GO:0019509">
    <property type="term" value="P:L-methionine salvage from methylthioadenosine"/>
    <property type="evidence" value="ECO:0007669"/>
    <property type="project" value="UniProtKB-UniRule"/>
</dbReference>
<dbReference type="Gene3D" id="3.90.1200.10">
    <property type="match status" value="1"/>
</dbReference>
<dbReference type="Gene3D" id="3.30.200.20">
    <property type="entry name" value="Phosphorylase Kinase, domain 1"/>
    <property type="match status" value="1"/>
</dbReference>
<dbReference type="HAMAP" id="MF_01683">
    <property type="entry name" value="Salvage_MtnK"/>
    <property type="match status" value="1"/>
</dbReference>
<dbReference type="InterPro" id="IPR002575">
    <property type="entry name" value="Aminoglycoside_PTrfase"/>
</dbReference>
<dbReference type="InterPro" id="IPR011009">
    <property type="entry name" value="Kinase-like_dom_sf"/>
</dbReference>
<dbReference type="InterPro" id="IPR009212">
    <property type="entry name" value="Methylthioribose_kinase"/>
</dbReference>
<dbReference type="NCBIfam" id="TIGR01767">
    <property type="entry name" value="MTRK"/>
    <property type="match status" value="1"/>
</dbReference>
<dbReference type="PANTHER" id="PTHR34273">
    <property type="entry name" value="METHYLTHIORIBOSE KINASE"/>
    <property type="match status" value="1"/>
</dbReference>
<dbReference type="PANTHER" id="PTHR34273:SF2">
    <property type="entry name" value="METHYLTHIORIBOSE KINASE"/>
    <property type="match status" value="1"/>
</dbReference>
<dbReference type="Pfam" id="PF01636">
    <property type="entry name" value="APH"/>
    <property type="match status" value="1"/>
</dbReference>
<dbReference type="PIRSF" id="PIRSF031134">
    <property type="entry name" value="MTRK"/>
    <property type="match status" value="1"/>
</dbReference>
<dbReference type="SUPFAM" id="SSF56112">
    <property type="entry name" value="Protein kinase-like (PK-like)"/>
    <property type="match status" value="1"/>
</dbReference>
<name>MTNK_YERPY</name>
<comment type="function">
    <text evidence="1">Catalyzes the phosphorylation of methylthioribose into methylthioribose-1-phosphate.</text>
</comment>
<comment type="catalytic activity">
    <reaction evidence="1">
        <text>5-(methylsulfanyl)-D-ribose + ATP = 5-(methylsulfanyl)-alpha-D-ribose 1-phosphate + ADP + H(+)</text>
        <dbReference type="Rhea" id="RHEA:22312"/>
        <dbReference type="ChEBI" id="CHEBI:15378"/>
        <dbReference type="ChEBI" id="CHEBI:30616"/>
        <dbReference type="ChEBI" id="CHEBI:58533"/>
        <dbReference type="ChEBI" id="CHEBI:78440"/>
        <dbReference type="ChEBI" id="CHEBI:456216"/>
        <dbReference type="EC" id="2.7.1.100"/>
    </reaction>
</comment>
<comment type="pathway">
    <text evidence="1">Amino-acid biosynthesis; L-methionine biosynthesis via salvage pathway; S-methyl-5-thio-alpha-D-ribose 1-phosphate from S-methyl-5'-thioadenosine (hydrolase route): step 2/2.</text>
</comment>
<comment type="subunit">
    <text evidence="1">Homodimer.</text>
</comment>
<comment type="similarity">
    <text evidence="1">Belongs to the methylthioribose kinase family.</text>
</comment>
<sequence length="407" mass="45253">MSRYHTFTAADAVEYARQFGQVADPQALVTADEIGDGNLNLVFKIRDTAGISRVIVKQALPYVRCVGESWPLTLDRARIEAETLLTHSQFCPQHTVKVLHHDAELAVMVQEDLSDHHIWRHELIQGNYYPQAAEQLGEYLAQTLFHTSDFYQSAQAKKAAVSRYTNPELCQITEDLFFTDPYIEHERNNFDPVLLPEVLSLRQDKALKLAVASLKHRFLSQAEALLHGDIHSGSIFVADGRLKTIDAEFGFYGPIGFDIGTALGNLLLNYCGLPGLAGPRDAAAGREQRLNDVQTVWQTFAARFLALSQEKAQDPALATEGYAAQFLQHVWRDAIGYCGSELIRRTIGLAHVADLDSIDDQEMRRACQRHALSLGRALILVAPHVDDVGGVVARIRQSPSSLTPQRC</sequence>
<feature type="chain" id="PRO_0000357355" description="Methylthioribose kinase">
    <location>
        <begin position="1"/>
        <end position="407"/>
    </location>
</feature>
<feature type="binding site" evidence="1">
    <location>
        <position position="40"/>
    </location>
    <ligand>
        <name>ATP</name>
        <dbReference type="ChEBI" id="CHEBI:30616"/>
    </ligand>
</feature>
<feature type="binding site" evidence="1">
    <location>
        <position position="57"/>
    </location>
    <ligand>
        <name>ATP</name>
        <dbReference type="ChEBI" id="CHEBI:30616"/>
    </ligand>
</feature>
<feature type="binding site" evidence="1">
    <location>
        <begin position="111"/>
        <end position="113"/>
    </location>
    <ligand>
        <name>ATP</name>
        <dbReference type="ChEBI" id="CHEBI:30616"/>
    </ligand>
</feature>
<feature type="binding site" evidence="1">
    <location>
        <position position="229"/>
    </location>
    <ligand>
        <name>substrate</name>
    </ligand>
</feature>
<feature type="binding site" evidence="1">
    <location>
        <begin position="246"/>
        <end position="248"/>
    </location>
    <ligand>
        <name>ATP</name>
        <dbReference type="ChEBI" id="CHEBI:30616"/>
    </ligand>
</feature>
<feature type="binding site" evidence="1">
    <location>
        <position position="344"/>
    </location>
    <ligand>
        <name>substrate</name>
    </ligand>
</feature>
<keyword id="KW-0028">Amino-acid biosynthesis</keyword>
<keyword id="KW-0067">ATP-binding</keyword>
<keyword id="KW-0418">Kinase</keyword>
<keyword id="KW-0486">Methionine biosynthesis</keyword>
<keyword id="KW-0547">Nucleotide-binding</keyword>
<keyword id="KW-0808">Transferase</keyword>
<organism>
    <name type="scientific">Yersinia pseudotuberculosis serotype O:3 (strain YPIII)</name>
    <dbReference type="NCBI Taxonomy" id="502800"/>
    <lineage>
        <taxon>Bacteria</taxon>
        <taxon>Pseudomonadati</taxon>
        <taxon>Pseudomonadota</taxon>
        <taxon>Gammaproteobacteria</taxon>
        <taxon>Enterobacterales</taxon>
        <taxon>Yersiniaceae</taxon>
        <taxon>Yersinia</taxon>
    </lineage>
</organism>
<protein>
    <recommendedName>
        <fullName evidence="1">Methylthioribose kinase</fullName>
        <shortName evidence="1">MTR kinase</shortName>
        <ecNumber evidence="1">2.7.1.100</ecNumber>
    </recommendedName>
</protein>
<reference key="1">
    <citation type="submission" date="2008-02" db="EMBL/GenBank/DDBJ databases">
        <title>Complete sequence of Yersinia pseudotuberculosis YPIII.</title>
        <authorList>
            <consortium name="US DOE Joint Genome Institute"/>
            <person name="Copeland A."/>
            <person name="Lucas S."/>
            <person name="Lapidus A."/>
            <person name="Glavina del Rio T."/>
            <person name="Dalin E."/>
            <person name="Tice H."/>
            <person name="Bruce D."/>
            <person name="Goodwin L."/>
            <person name="Pitluck S."/>
            <person name="Munk A.C."/>
            <person name="Brettin T."/>
            <person name="Detter J.C."/>
            <person name="Han C."/>
            <person name="Tapia R."/>
            <person name="Schmutz J."/>
            <person name="Larimer F."/>
            <person name="Land M."/>
            <person name="Hauser L."/>
            <person name="Challacombe J.F."/>
            <person name="Green L."/>
            <person name="Lindler L.E."/>
            <person name="Nikolich M.P."/>
            <person name="Richardson P."/>
        </authorList>
    </citation>
    <scope>NUCLEOTIDE SEQUENCE [LARGE SCALE GENOMIC DNA]</scope>
    <source>
        <strain>YPIII</strain>
    </source>
</reference>
<accession>B1JIK2</accession>
<gene>
    <name evidence="1" type="primary">mtnK</name>
    <name type="ordered locus">YPK_3317</name>
</gene>
<proteinExistence type="inferred from homology"/>